<accession>Q57699</accession>
<sequence>MENLEKKIELLKKIREFLILNLEIKKLMQELNVDSDIYEAYEKVTKIVREPNIKLYRQYYDAIKEMFYEEYGKKRKDISWYPKIDYNRCKNCEKCISFCPRGVYDAENGKVVVKYPYSCIVNCNACSIMCCENNAIIFPDEKIPRRN</sequence>
<evidence type="ECO:0000250" key="1"/>
<evidence type="ECO:0000255" key="2">
    <source>
        <dbReference type="PROSITE-ProRule" id="PRU00711"/>
    </source>
</evidence>
<keyword id="KW-0004">4Fe-4S</keyword>
<keyword id="KW-0249">Electron transport</keyword>
<keyword id="KW-0408">Iron</keyword>
<keyword id="KW-0411">Iron-sulfur</keyword>
<keyword id="KW-0479">Metal-binding</keyword>
<keyword id="KW-1185">Reference proteome</keyword>
<keyword id="KW-0677">Repeat</keyword>
<keyword id="KW-0813">Transport</keyword>
<protein>
    <recommendedName>
        <fullName>Uncharacterized ferredoxin MJ0251</fullName>
    </recommendedName>
</protein>
<proteinExistence type="inferred from homology"/>
<organism>
    <name type="scientific">Methanocaldococcus jannaschii (strain ATCC 43067 / DSM 2661 / JAL-1 / JCM 10045 / NBRC 100440)</name>
    <name type="common">Methanococcus jannaschii</name>
    <dbReference type="NCBI Taxonomy" id="243232"/>
    <lineage>
        <taxon>Archaea</taxon>
        <taxon>Methanobacteriati</taxon>
        <taxon>Methanobacteriota</taxon>
        <taxon>Methanomada group</taxon>
        <taxon>Methanococci</taxon>
        <taxon>Methanococcales</taxon>
        <taxon>Methanocaldococcaceae</taxon>
        <taxon>Methanocaldococcus</taxon>
    </lineage>
</organism>
<comment type="cofactor">
    <cofactor evidence="1">
        <name>[4Fe-4S] cluster</name>
        <dbReference type="ChEBI" id="CHEBI:49883"/>
    </cofactor>
    <text evidence="1">Binds 2 [4Fe-4S] clusters.</text>
</comment>
<dbReference type="EMBL" id="L77117">
    <property type="protein sequence ID" value="AAB98238.1"/>
    <property type="molecule type" value="Genomic_DNA"/>
</dbReference>
<dbReference type="PIR" id="D64331">
    <property type="entry name" value="D64331"/>
</dbReference>
<dbReference type="RefSeq" id="WP_010869749.1">
    <property type="nucleotide sequence ID" value="NC_000909.1"/>
</dbReference>
<dbReference type="FunCoup" id="Q57699">
    <property type="interactions" value="3"/>
</dbReference>
<dbReference type="STRING" id="243232.MJ_0251"/>
<dbReference type="PaxDb" id="243232-MJ_0251"/>
<dbReference type="EnsemblBacteria" id="AAB98238">
    <property type="protein sequence ID" value="AAB98238"/>
    <property type="gene ID" value="MJ_0251"/>
</dbReference>
<dbReference type="GeneID" id="1451105"/>
<dbReference type="KEGG" id="mja:MJ_0251"/>
<dbReference type="eggNOG" id="arCOG02461">
    <property type="taxonomic scope" value="Archaea"/>
</dbReference>
<dbReference type="HOGENOM" id="CLU_1745537_0_0_2"/>
<dbReference type="InParanoid" id="Q57699"/>
<dbReference type="OrthoDB" id="23833at2157"/>
<dbReference type="Proteomes" id="UP000000805">
    <property type="component" value="Chromosome"/>
</dbReference>
<dbReference type="GO" id="GO:0051539">
    <property type="term" value="F:4 iron, 4 sulfur cluster binding"/>
    <property type="evidence" value="ECO:0007669"/>
    <property type="project" value="UniProtKB-KW"/>
</dbReference>
<dbReference type="GO" id="GO:0046872">
    <property type="term" value="F:metal ion binding"/>
    <property type="evidence" value="ECO:0007669"/>
    <property type="project" value="UniProtKB-KW"/>
</dbReference>
<dbReference type="GO" id="GO:0016491">
    <property type="term" value="F:oxidoreductase activity"/>
    <property type="evidence" value="ECO:0007669"/>
    <property type="project" value="UniProtKB-ARBA"/>
</dbReference>
<dbReference type="Gene3D" id="3.30.70.20">
    <property type="match status" value="1"/>
</dbReference>
<dbReference type="InterPro" id="IPR017896">
    <property type="entry name" value="4Fe4S_Fe-S-bd"/>
</dbReference>
<dbReference type="InterPro" id="IPR017900">
    <property type="entry name" value="4Fe4S_Fe_S_CS"/>
</dbReference>
<dbReference type="InterPro" id="IPR050572">
    <property type="entry name" value="Fe-S_Ferredoxin"/>
</dbReference>
<dbReference type="PANTHER" id="PTHR43687">
    <property type="entry name" value="ADENYLYLSULFATE REDUCTASE, BETA SUBUNIT"/>
    <property type="match status" value="1"/>
</dbReference>
<dbReference type="PANTHER" id="PTHR43687:SF2">
    <property type="entry name" value="FERREDOXIN 3"/>
    <property type="match status" value="1"/>
</dbReference>
<dbReference type="Pfam" id="PF00037">
    <property type="entry name" value="Fer4"/>
    <property type="match status" value="1"/>
</dbReference>
<dbReference type="SUPFAM" id="SSF54862">
    <property type="entry name" value="4Fe-4S ferredoxins"/>
    <property type="match status" value="1"/>
</dbReference>
<dbReference type="PROSITE" id="PS00198">
    <property type="entry name" value="4FE4S_FER_1"/>
    <property type="match status" value="1"/>
</dbReference>
<dbReference type="PROSITE" id="PS51379">
    <property type="entry name" value="4FE4S_FER_2"/>
    <property type="match status" value="2"/>
</dbReference>
<gene>
    <name type="ordered locus">MJ0251</name>
</gene>
<reference key="1">
    <citation type="journal article" date="1996" name="Science">
        <title>Complete genome sequence of the methanogenic archaeon, Methanococcus jannaschii.</title>
        <authorList>
            <person name="Bult C.J."/>
            <person name="White O."/>
            <person name="Olsen G.J."/>
            <person name="Zhou L."/>
            <person name="Fleischmann R.D."/>
            <person name="Sutton G.G."/>
            <person name="Blake J.A."/>
            <person name="FitzGerald L.M."/>
            <person name="Clayton R.A."/>
            <person name="Gocayne J.D."/>
            <person name="Kerlavage A.R."/>
            <person name="Dougherty B.A."/>
            <person name="Tomb J.-F."/>
            <person name="Adams M.D."/>
            <person name="Reich C.I."/>
            <person name="Overbeek R."/>
            <person name="Kirkness E.F."/>
            <person name="Weinstock K.G."/>
            <person name="Merrick J.M."/>
            <person name="Glodek A."/>
            <person name="Scott J.L."/>
            <person name="Geoghagen N.S.M."/>
            <person name="Weidman J.F."/>
            <person name="Fuhrmann J.L."/>
            <person name="Nguyen D."/>
            <person name="Utterback T.R."/>
            <person name="Kelley J.M."/>
            <person name="Peterson J.D."/>
            <person name="Sadow P.W."/>
            <person name="Hanna M.C."/>
            <person name="Cotton M.D."/>
            <person name="Roberts K.M."/>
            <person name="Hurst M.A."/>
            <person name="Kaine B.P."/>
            <person name="Borodovsky M."/>
            <person name="Klenk H.-P."/>
            <person name="Fraser C.M."/>
            <person name="Smith H.O."/>
            <person name="Woese C.R."/>
            <person name="Venter J.C."/>
        </authorList>
    </citation>
    <scope>NUCLEOTIDE SEQUENCE [LARGE SCALE GENOMIC DNA]</scope>
    <source>
        <strain>ATCC 43067 / DSM 2661 / JAL-1 / JCM 10045 / NBRC 100440</strain>
    </source>
</reference>
<name>FER5_METJA</name>
<feature type="chain" id="PRO_0000159133" description="Uncharacterized ferredoxin MJ0251">
    <location>
        <begin position="1"/>
        <end position="147"/>
    </location>
</feature>
<feature type="domain" description="4Fe-4S ferredoxin-type 1" evidence="2">
    <location>
        <begin position="80"/>
        <end position="109"/>
    </location>
</feature>
<feature type="domain" description="4Fe-4S ferredoxin-type 2" evidence="2">
    <location>
        <begin position="110"/>
        <end position="141"/>
    </location>
</feature>
<feature type="binding site" evidence="1">
    <location>
        <position position="89"/>
    </location>
    <ligand>
        <name>[4Fe-4S] cluster</name>
        <dbReference type="ChEBI" id="CHEBI:49883"/>
        <label>1</label>
    </ligand>
</feature>
<feature type="binding site" evidence="1">
    <location>
        <position position="92"/>
    </location>
    <ligand>
        <name>[4Fe-4S] cluster</name>
        <dbReference type="ChEBI" id="CHEBI:49883"/>
        <label>1</label>
    </ligand>
</feature>
<feature type="binding site" evidence="1">
    <location>
        <position position="95"/>
    </location>
    <ligand>
        <name>[4Fe-4S] cluster</name>
        <dbReference type="ChEBI" id="CHEBI:49883"/>
        <label>1</label>
    </ligand>
</feature>
<feature type="binding site" evidence="1">
    <location>
        <position position="99"/>
    </location>
    <ligand>
        <name>[4Fe-4S] cluster</name>
        <dbReference type="ChEBI" id="CHEBI:49883"/>
        <label>1</label>
    </ligand>
</feature>
<feature type="binding site" evidence="1">
    <location>
        <position position="119"/>
    </location>
    <ligand>
        <name>[4Fe-4S] cluster</name>
        <dbReference type="ChEBI" id="CHEBI:49883"/>
        <label>2</label>
    </ligand>
</feature>
<feature type="binding site" evidence="1">
    <location>
        <position position="123"/>
    </location>
    <ligand>
        <name>[4Fe-4S] cluster</name>
        <dbReference type="ChEBI" id="CHEBI:49883"/>
        <label>2</label>
    </ligand>
</feature>
<feature type="binding site" evidence="1">
    <location>
        <position position="126"/>
    </location>
    <ligand>
        <name>[4Fe-4S] cluster</name>
        <dbReference type="ChEBI" id="CHEBI:49883"/>
        <label>2</label>
    </ligand>
</feature>
<feature type="binding site" evidence="1">
    <location>
        <position position="130"/>
    </location>
    <ligand>
        <name>[4Fe-4S] cluster</name>
        <dbReference type="ChEBI" id="CHEBI:49883"/>
        <label>2</label>
    </ligand>
</feature>